<organism>
    <name type="scientific">Paramagnetospirillum magneticum (strain ATCC 700264 / AMB-1)</name>
    <name type="common">Magnetospirillum magneticum</name>
    <dbReference type="NCBI Taxonomy" id="342108"/>
    <lineage>
        <taxon>Bacteria</taxon>
        <taxon>Pseudomonadati</taxon>
        <taxon>Pseudomonadota</taxon>
        <taxon>Alphaproteobacteria</taxon>
        <taxon>Rhodospirillales</taxon>
        <taxon>Magnetospirillaceae</taxon>
        <taxon>Paramagnetospirillum</taxon>
    </lineage>
</organism>
<feature type="chain" id="PRO_0000327075" description="Protoheme IX farnesyltransferase 1">
    <location>
        <begin position="1"/>
        <end position="283"/>
    </location>
</feature>
<feature type="transmembrane region" description="Helical" evidence="1">
    <location>
        <begin position="14"/>
        <end position="34"/>
    </location>
</feature>
<feature type="transmembrane region" description="Helical" evidence="1">
    <location>
        <begin position="35"/>
        <end position="55"/>
    </location>
</feature>
<feature type="transmembrane region" description="Helical" evidence="1">
    <location>
        <begin position="84"/>
        <end position="104"/>
    </location>
</feature>
<feature type="transmembrane region" description="Helical" evidence="1">
    <location>
        <begin position="107"/>
        <end position="127"/>
    </location>
</feature>
<feature type="transmembrane region" description="Helical" evidence="1">
    <location>
        <begin position="133"/>
        <end position="153"/>
    </location>
</feature>
<feature type="transmembrane region" description="Helical" evidence="1">
    <location>
        <begin position="163"/>
        <end position="183"/>
    </location>
</feature>
<feature type="transmembrane region" description="Helical" evidence="1">
    <location>
        <begin position="208"/>
        <end position="228"/>
    </location>
</feature>
<feature type="transmembrane region" description="Helical" evidence="1">
    <location>
        <begin position="231"/>
        <end position="251"/>
    </location>
</feature>
<feature type="transmembrane region" description="Helical" evidence="1">
    <location>
        <begin position="258"/>
        <end position="278"/>
    </location>
</feature>
<keyword id="KW-0997">Cell inner membrane</keyword>
<keyword id="KW-1003">Cell membrane</keyword>
<keyword id="KW-0350">Heme biosynthesis</keyword>
<keyword id="KW-0472">Membrane</keyword>
<keyword id="KW-0808">Transferase</keyword>
<keyword id="KW-0812">Transmembrane</keyword>
<keyword id="KW-1133">Transmembrane helix</keyword>
<protein>
    <recommendedName>
        <fullName evidence="1">Protoheme IX farnesyltransferase 1</fullName>
        <ecNumber evidence="1">2.5.1.141</ecNumber>
    </recommendedName>
    <alternativeName>
        <fullName evidence="1">Heme B farnesyltransferase 1</fullName>
    </alternativeName>
    <alternativeName>
        <fullName evidence="1">Heme O synthase 1</fullName>
    </alternativeName>
</protein>
<proteinExistence type="inferred from homology"/>
<accession>Q2W9D1</accession>
<reference key="1">
    <citation type="journal article" date="2005" name="DNA Res.">
        <title>Complete genome sequence of the facultative anaerobic magnetotactic bacterium Magnetospirillum sp. strain AMB-1.</title>
        <authorList>
            <person name="Matsunaga T."/>
            <person name="Okamura Y."/>
            <person name="Fukuda Y."/>
            <person name="Wahyudi A.T."/>
            <person name="Murase Y."/>
            <person name="Takeyama H."/>
        </authorList>
    </citation>
    <scope>NUCLEOTIDE SEQUENCE [LARGE SCALE GENOMIC DNA]</scope>
    <source>
        <strain>ATCC 700264 / AMB-1</strain>
    </source>
</reference>
<sequence length="283" mass="30636">MTFRQYIELLKPRIALMIALTAITGYGAVATKVDPVALLLLTLAMILGSAASAVFNHVWDRDIDRLMRRTSRRPMATGAGTPALGFALAVVLMVAGMALANAAFNWVVALHLFLGGFVYVAIYTVWLKRRHWTNIIIGGAAGSFAVLAGAAAVDQTQWLLPMVLALVLFLWTPSHFWSLAILLADDYRQAGVPMLPVVVGAKRTAWCILANTVILVGASLLPWGLGLLGNVYGFVAAVSGAVLLGFNVVLVRDTSRRWAGWNFAASMPYLLLLFIAVFADKHW</sequence>
<gene>
    <name evidence="1" type="primary">ctaB1</name>
    <name type="ordered locus">amb0740</name>
</gene>
<dbReference type="EC" id="2.5.1.141" evidence="1"/>
<dbReference type="EMBL" id="AP007255">
    <property type="protein sequence ID" value="BAE49544.1"/>
    <property type="status" value="ALT_INIT"/>
    <property type="molecule type" value="Genomic_DNA"/>
</dbReference>
<dbReference type="RefSeq" id="WP_043743357.1">
    <property type="nucleotide sequence ID" value="NC_007626.1"/>
</dbReference>
<dbReference type="SMR" id="Q2W9D1"/>
<dbReference type="STRING" id="342108.amb0740"/>
<dbReference type="KEGG" id="mag:amb0740"/>
<dbReference type="HOGENOM" id="CLU_029631_0_2_5"/>
<dbReference type="OrthoDB" id="9814417at2"/>
<dbReference type="UniPathway" id="UPA00834">
    <property type="reaction ID" value="UER00712"/>
</dbReference>
<dbReference type="Proteomes" id="UP000007058">
    <property type="component" value="Chromosome"/>
</dbReference>
<dbReference type="GO" id="GO:0005886">
    <property type="term" value="C:plasma membrane"/>
    <property type="evidence" value="ECO:0007669"/>
    <property type="project" value="UniProtKB-SubCell"/>
</dbReference>
<dbReference type="GO" id="GO:0008495">
    <property type="term" value="F:protoheme IX farnesyltransferase activity"/>
    <property type="evidence" value="ECO:0007669"/>
    <property type="project" value="UniProtKB-UniRule"/>
</dbReference>
<dbReference type="GO" id="GO:0048034">
    <property type="term" value="P:heme O biosynthetic process"/>
    <property type="evidence" value="ECO:0007669"/>
    <property type="project" value="UniProtKB-UniRule"/>
</dbReference>
<dbReference type="CDD" id="cd13957">
    <property type="entry name" value="PT_UbiA_Cox10"/>
    <property type="match status" value="1"/>
</dbReference>
<dbReference type="Gene3D" id="1.10.357.140">
    <property type="entry name" value="UbiA prenyltransferase"/>
    <property type="match status" value="1"/>
</dbReference>
<dbReference type="HAMAP" id="MF_00154">
    <property type="entry name" value="CyoE_CtaB"/>
    <property type="match status" value="1"/>
</dbReference>
<dbReference type="InterPro" id="IPR006369">
    <property type="entry name" value="Protohaem_IX_farnesylTrfase"/>
</dbReference>
<dbReference type="InterPro" id="IPR000537">
    <property type="entry name" value="UbiA_prenyltransferase"/>
</dbReference>
<dbReference type="InterPro" id="IPR030470">
    <property type="entry name" value="UbiA_prenylTrfase_CS"/>
</dbReference>
<dbReference type="InterPro" id="IPR044878">
    <property type="entry name" value="UbiA_sf"/>
</dbReference>
<dbReference type="NCBIfam" id="TIGR01473">
    <property type="entry name" value="cyoE_ctaB"/>
    <property type="match status" value="1"/>
</dbReference>
<dbReference type="PANTHER" id="PTHR43448">
    <property type="entry name" value="PROTOHEME IX FARNESYLTRANSFERASE, MITOCHONDRIAL"/>
    <property type="match status" value="1"/>
</dbReference>
<dbReference type="PANTHER" id="PTHR43448:SF2">
    <property type="entry name" value="PROTOHEME IX FARNESYLTRANSFERASE, MITOCHONDRIAL"/>
    <property type="match status" value="1"/>
</dbReference>
<dbReference type="Pfam" id="PF01040">
    <property type="entry name" value="UbiA"/>
    <property type="match status" value="1"/>
</dbReference>
<dbReference type="PROSITE" id="PS00943">
    <property type="entry name" value="UBIA"/>
    <property type="match status" value="1"/>
</dbReference>
<evidence type="ECO:0000255" key="1">
    <source>
        <dbReference type="HAMAP-Rule" id="MF_00154"/>
    </source>
</evidence>
<evidence type="ECO:0000305" key="2"/>
<comment type="function">
    <text evidence="1">Converts heme B (protoheme IX) to heme O by substitution of the vinyl group on carbon 2 of heme B porphyrin ring with a hydroxyethyl farnesyl side group.</text>
</comment>
<comment type="catalytic activity">
    <reaction evidence="1">
        <text>heme b + (2E,6E)-farnesyl diphosphate + H2O = Fe(II)-heme o + diphosphate</text>
        <dbReference type="Rhea" id="RHEA:28070"/>
        <dbReference type="ChEBI" id="CHEBI:15377"/>
        <dbReference type="ChEBI" id="CHEBI:33019"/>
        <dbReference type="ChEBI" id="CHEBI:60344"/>
        <dbReference type="ChEBI" id="CHEBI:60530"/>
        <dbReference type="ChEBI" id="CHEBI:175763"/>
        <dbReference type="EC" id="2.5.1.141"/>
    </reaction>
</comment>
<comment type="pathway">
    <text evidence="1">Porphyrin-containing compound metabolism; heme O biosynthesis; heme O from protoheme: step 1/1.</text>
</comment>
<comment type="subcellular location">
    <subcellularLocation>
        <location evidence="1">Cell inner membrane</location>
        <topology evidence="1">Multi-pass membrane protein</topology>
    </subcellularLocation>
</comment>
<comment type="miscellaneous">
    <text evidence="1">Carbon 2 of the heme B porphyrin ring is defined according to the Fischer nomenclature.</text>
</comment>
<comment type="similarity">
    <text evidence="1">Belongs to the UbiA prenyltransferase family. Protoheme IX farnesyltransferase subfamily.</text>
</comment>
<comment type="sequence caution" evidence="2">
    <conflict type="erroneous initiation">
        <sequence resource="EMBL-CDS" id="BAE49544"/>
    </conflict>
</comment>
<name>COXX1_PARM1</name>